<name>RL17_NATTJ</name>
<dbReference type="EMBL" id="CP001034">
    <property type="protein sequence ID" value="ACB83823.1"/>
    <property type="molecule type" value="Genomic_DNA"/>
</dbReference>
<dbReference type="RefSeq" id="WP_012446712.1">
    <property type="nucleotide sequence ID" value="NC_010718.1"/>
</dbReference>
<dbReference type="SMR" id="B2A4Q1"/>
<dbReference type="FunCoup" id="B2A4Q1">
    <property type="interactions" value="392"/>
</dbReference>
<dbReference type="STRING" id="457570.Nther_0224"/>
<dbReference type="KEGG" id="nth:Nther_0224"/>
<dbReference type="eggNOG" id="COG0203">
    <property type="taxonomic scope" value="Bacteria"/>
</dbReference>
<dbReference type="HOGENOM" id="CLU_074407_2_2_9"/>
<dbReference type="InParanoid" id="B2A4Q1"/>
<dbReference type="OrthoDB" id="9809073at2"/>
<dbReference type="Proteomes" id="UP000001683">
    <property type="component" value="Chromosome"/>
</dbReference>
<dbReference type="GO" id="GO:0022625">
    <property type="term" value="C:cytosolic large ribosomal subunit"/>
    <property type="evidence" value="ECO:0007669"/>
    <property type="project" value="TreeGrafter"/>
</dbReference>
<dbReference type="GO" id="GO:0003735">
    <property type="term" value="F:structural constituent of ribosome"/>
    <property type="evidence" value="ECO:0007669"/>
    <property type="project" value="InterPro"/>
</dbReference>
<dbReference type="GO" id="GO:0006412">
    <property type="term" value="P:translation"/>
    <property type="evidence" value="ECO:0007669"/>
    <property type="project" value="UniProtKB-UniRule"/>
</dbReference>
<dbReference type="FunFam" id="3.90.1030.10:FF:000001">
    <property type="entry name" value="50S ribosomal protein L17"/>
    <property type="match status" value="1"/>
</dbReference>
<dbReference type="Gene3D" id="3.90.1030.10">
    <property type="entry name" value="Ribosomal protein L17"/>
    <property type="match status" value="1"/>
</dbReference>
<dbReference type="HAMAP" id="MF_01368">
    <property type="entry name" value="Ribosomal_bL17"/>
    <property type="match status" value="1"/>
</dbReference>
<dbReference type="InterPro" id="IPR000456">
    <property type="entry name" value="Ribosomal_bL17"/>
</dbReference>
<dbReference type="InterPro" id="IPR047859">
    <property type="entry name" value="Ribosomal_bL17_CS"/>
</dbReference>
<dbReference type="InterPro" id="IPR036373">
    <property type="entry name" value="Ribosomal_bL17_sf"/>
</dbReference>
<dbReference type="NCBIfam" id="TIGR00059">
    <property type="entry name" value="L17"/>
    <property type="match status" value="1"/>
</dbReference>
<dbReference type="PANTHER" id="PTHR14413:SF16">
    <property type="entry name" value="LARGE RIBOSOMAL SUBUNIT PROTEIN BL17M"/>
    <property type="match status" value="1"/>
</dbReference>
<dbReference type="PANTHER" id="PTHR14413">
    <property type="entry name" value="RIBOSOMAL PROTEIN L17"/>
    <property type="match status" value="1"/>
</dbReference>
<dbReference type="Pfam" id="PF01196">
    <property type="entry name" value="Ribosomal_L17"/>
    <property type="match status" value="1"/>
</dbReference>
<dbReference type="SUPFAM" id="SSF64263">
    <property type="entry name" value="Prokaryotic ribosomal protein L17"/>
    <property type="match status" value="1"/>
</dbReference>
<dbReference type="PROSITE" id="PS01167">
    <property type="entry name" value="RIBOSOMAL_L17"/>
    <property type="match status" value="1"/>
</dbReference>
<gene>
    <name evidence="1" type="primary">rplQ</name>
    <name type="ordered locus">Nther_0224</name>
</gene>
<comment type="subunit">
    <text evidence="1">Part of the 50S ribosomal subunit. Contacts protein L32.</text>
</comment>
<comment type="similarity">
    <text evidence="1">Belongs to the bacterial ribosomal protein bL17 family.</text>
</comment>
<accession>B2A4Q1</accession>
<reference key="1">
    <citation type="submission" date="2008-04" db="EMBL/GenBank/DDBJ databases">
        <title>Complete sequence of chromosome of Natranaerobius thermophilus JW/NM-WN-LF.</title>
        <authorList>
            <consortium name="US DOE Joint Genome Institute"/>
            <person name="Copeland A."/>
            <person name="Lucas S."/>
            <person name="Lapidus A."/>
            <person name="Glavina del Rio T."/>
            <person name="Dalin E."/>
            <person name="Tice H."/>
            <person name="Bruce D."/>
            <person name="Goodwin L."/>
            <person name="Pitluck S."/>
            <person name="Chertkov O."/>
            <person name="Brettin T."/>
            <person name="Detter J.C."/>
            <person name="Han C."/>
            <person name="Kuske C.R."/>
            <person name="Schmutz J."/>
            <person name="Larimer F."/>
            <person name="Land M."/>
            <person name="Hauser L."/>
            <person name="Kyrpides N."/>
            <person name="Lykidis A."/>
            <person name="Mesbah N.M."/>
            <person name="Wiegel J."/>
        </authorList>
    </citation>
    <scope>NUCLEOTIDE SEQUENCE [LARGE SCALE GENOMIC DNA]</scope>
    <source>
        <strain>ATCC BAA-1301 / DSM 18059 / JW/NM-WN-LF</strain>
    </source>
</reference>
<sequence>MSYKKLKRNKDQRKALLKNLTTAFLRDEKIETTEAKAKEVSRLAEKMITLAKKNTLASRRQALSYLTDEDVVTKLFENIGPKFQERQGGYTRVLKKGPRQGDGAPMAILELVE</sequence>
<protein>
    <recommendedName>
        <fullName evidence="1">Large ribosomal subunit protein bL17</fullName>
    </recommendedName>
    <alternativeName>
        <fullName evidence="2">50S ribosomal protein L17</fullName>
    </alternativeName>
</protein>
<feature type="chain" id="PRO_1000144455" description="Large ribosomal subunit protein bL17">
    <location>
        <begin position="1"/>
        <end position="113"/>
    </location>
</feature>
<proteinExistence type="inferred from homology"/>
<organism>
    <name type="scientific">Natranaerobius thermophilus (strain ATCC BAA-1301 / DSM 18059 / JW/NM-WN-LF)</name>
    <dbReference type="NCBI Taxonomy" id="457570"/>
    <lineage>
        <taxon>Bacteria</taxon>
        <taxon>Bacillati</taxon>
        <taxon>Bacillota</taxon>
        <taxon>Clostridia</taxon>
        <taxon>Natranaerobiales</taxon>
        <taxon>Natranaerobiaceae</taxon>
        <taxon>Natranaerobius</taxon>
    </lineage>
</organism>
<evidence type="ECO:0000255" key="1">
    <source>
        <dbReference type="HAMAP-Rule" id="MF_01368"/>
    </source>
</evidence>
<evidence type="ECO:0000305" key="2"/>
<keyword id="KW-1185">Reference proteome</keyword>
<keyword id="KW-0687">Ribonucleoprotein</keyword>
<keyword id="KW-0689">Ribosomal protein</keyword>